<protein>
    <recommendedName>
        <fullName>Protein IMPACT homolog</fullName>
    </recommendedName>
</protein>
<accession>P25637</accession>
<accession>D6VR64</accession>
<proteinExistence type="evidence at protein level"/>
<gene>
    <name type="primary">YIH1</name>
    <name type="ordered locus">YCR059C</name>
    <name type="ORF">YCR59C</name>
</gene>
<evidence type="ECO:0000255" key="1">
    <source>
        <dbReference type="PROSITE-ProRule" id="PRU00179"/>
    </source>
</evidence>
<evidence type="ECO:0000269" key="2">
    <source>
    </source>
</evidence>
<evidence type="ECO:0000269" key="3">
    <source>
    </source>
</evidence>
<evidence type="ECO:0000269" key="4">
    <source>
    </source>
</evidence>
<evidence type="ECO:0000269" key="5">
    <source>
    </source>
</evidence>
<evidence type="ECO:0000269" key="6">
    <source>
    </source>
</evidence>
<evidence type="ECO:0000269" key="7">
    <source>
    </source>
</evidence>
<evidence type="ECO:0000269" key="8">
    <source>
    </source>
</evidence>
<evidence type="ECO:0000305" key="9"/>
<evidence type="ECO:0007744" key="10">
    <source>
    </source>
</evidence>
<evidence type="ECO:0007829" key="11">
    <source>
        <dbReference type="PDB" id="6U1L"/>
    </source>
</evidence>
<evidence type="ECO:0007829" key="12">
    <source>
        <dbReference type="PDB" id="6U1O"/>
    </source>
</evidence>
<dbReference type="EMBL" id="X59720">
    <property type="protein sequence ID" value="CAA42287.1"/>
    <property type="molecule type" value="Genomic_DNA"/>
</dbReference>
<dbReference type="EMBL" id="AY693113">
    <property type="protein sequence ID" value="AAT93132.1"/>
    <property type="molecule type" value="Genomic_DNA"/>
</dbReference>
<dbReference type="EMBL" id="BK006937">
    <property type="protein sequence ID" value="DAA07533.1"/>
    <property type="molecule type" value="Genomic_DNA"/>
</dbReference>
<dbReference type="PIR" id="S19473">
    <property type="entry name" value="S19473"/>
</dbReference>
<dbReference type="RefSeq" id="NP_009985.1">
    <property type="nucleotide sequence ID" value="NM_001178770.1"/>
</dbReference>
<dbReference type="PDB" id="6BQI">
    <property type="method" value="Other"/>
    <property type="chains" value="A=1-258"/>
</dbReference>
<dbReference type="PDB" id="6U1L">
    <property type="method" value="NMR"/>
    <property type="chains" value="A=1-258"/>
</dbReference>
<dbReference type="PDB" id="6U1O">
    <property type="method" value="NMR"/>
    <property type="chains" value="A=1-258"/>
</dbReference>
<dbReference type="PDBsum" id="6BQI"/>
<dbReference type="PDBsum" id="6U1L"/>
<dbReference type="PDBsum" id="6U1O"/>
<dbReference type="SMR" id="P25637"/>
<dbReference type="BioGRID" id="31036">
    <property type="interactions" value="100"/>
</dbReference>
<dbReference type="DIP" id="DIP-1846N"/>
<dbReference type="FunCoup" id="P25637">
    <property type="interactions" value="462"/>
</dbReference>
<dbReference type="IntAct" id="P25637">
    <property type="interactions" value="7"/>
</dbReference>
<dbReference type="MINT" id="P25637"/>
<dbReference type="STRING" id="4932.YCR059C"/>
<dbReference type="iPTMnet" id="P25637"/>
<dbReference type="PaxDb" id="4932-YCR059C"/>
<dbReference type="PeptideAtlas" id="P25637"/>
<dbReference type="EnsemblFungi" id="YCR059C_mRNA">
    <property type="protein sequence ID" value="YCR059C"/>
    <property type="gene ID" value="YCR059C"/>
</dbReference>
<dbReference type="GeneID" id="850423"/>
<dbReference type="KEGG" id="sce:YCR059C"/>
<dbReference type="AGR" id="SGD:S000000655"/>
<dbReference type="SGD" id="S000000655">
    <property type="gene designation" value="YIH1"/>
</dbReference>
<dbReference type="VEuPathDB" id="FungiDB:YCR059C"/>
<dbReference type="eggNOG" id="KOG3299">
    <property type="taxonomic scope" value="Eukaryota"/>
</dbReference>
<dbReference type="GeneTree" id="ENSGT00390000017571"/>
<dbReference type="HOGENOM" id="CLU_045276_1_0_1"/>
<dbReference type="InParanoid" id="P25637"/>
<dbReference type="OMA" id="HLMQVMD"/>
<dbReference type="OrthoDB" id="69641at2759"/>
<dbReference type="BioCyc" id="YEAST:G3O-29364-MONOMER"/>
<dbReference type="BioGRID-ORCS" id="850423">
    <property type="hits" value="5 hits in 10 CRISPR screens"/>
</dbReference>
<dbReference type="PRO" id="PR:P25637"/>
<dbReference type="Proteomes" id="UP000002311">
    <property type="component" value="Chromosome III"/>
</dbReference>
<dbReference type="RNAct" id="P25637">
    <property type="molecule type" value="protein"/>
</dbReference>
<dbReference type="GO" id="GO:0005737">
    <property type="term" value="C:cytoplasm"/>
    <property type="evidence" value="ECO:0007005"/>
    <property type="project" value="SGD"/>
</dbReference>
<dbReference type="GO" id="GO:0005634">
    <property type="term" value="C:nucleus"/>
    <property type="evidence" value="ECO:0007005"/>
    <property type="project" value="SGD"/>
</dbReference>
<dbReference type="GO" id="GO:0003785">
    <property type="term" value="F:actin monomer binding"/>
    <property type="evidence" value="ECO:0000314"/>
    <property type="project" value="SGD"/>
</dbReference>
<dbReference type="GO" id="GO:0004860">
    <property type="term" value="F:protein kinase inhibitor activity"/>
    <property type="evidence" value="ECO:0000315"/>
    <property type="project" value="SGD"/>
</dbReference>
<dbReference type="GO" id="GO:0043022">
    <property type="term" value="F:ribosome binding"/>
    <property type="evidence" value="ECO:0000314"/>
    <property type="project" value="SGD"/>
</dbReference>
<dbReference type="GO" id="GO:0034198">
    <property type="term" value="P:cellular response to amino acid starvation"/>
    <property type="evidence" value="ECO:0000314"/>
    <property type="project" value="UniProtKB"/>
</dbReference>
<dbReference type="GO" id="GO:0140469">
    <property type="term" value="P:GCN2-mediated signaling"/>
    <property type="evidence" value="ECO:0000315"/>
    <property type="project" value="UniProtKB"/>
</dbReference>
<dbReference type="GO" id="GO:0033673">
    <property type="term" value="P:negative regulation of kinase activity"/>
    <property type="evidence" value="ECO:0000315"/>
    <property type="project" value="UniProtKB"/>
</dbReference>
<dbReference type="GO" id="GO:0001933">
    <property type="term" value="P:negative regulation of protein phosphorylation"/>
    <property type="evidence" value="ECO:0000315"/>
    <property type="project" value="UniProtKB"/>
</dbReference>
<dbReference type="GO" id="GO:0031333">
    <property type="term" value="P:negative regulation of protein-containing complex assembly"/>
    <property type="evidence" value="ECO:0000314"/>
    <property type="project" value="UniProtKB"/>
</dbReference>
<dbReference type="GO" id="GO:0006446">
    <property type="term" value="P:regulation of translational initiation"/>
    <property type="evidence" value="ECO:0000318"/>
    <property type="project" value="GO_Central"/>
</dbReference>
<dbReference type="CDD" id="cd23822">
    <property type="entry name" value="RWD_ScYIH1-like"/>
    <property type="match status" value="1"/>
</dbReference>
<dbReference type="FunFam" id="3.30.230.30:FF:000002">
    <property type="entry name" value="Protein IMPACT homolog"/>
    <property type="match status" value="1"/>
</dbReference>
<dbReference type="FunFam" id="3.10.110.10:FF:000114">
    <property type="entry name" value="Yih1p"/>
    <property type="match status" value="1"/>
</dbReference>
<dbReference type="Gene3D" id="3.30.230.30">
    <property type="entry name" value="Impact, N-terminal domain"/>
    <property type="match status" value="1"/>
</dbReference>
<dbReference type="Gene3D" id="3.10.110.10">
    <property type="entry name" value="Ubiquitin Conjugating Enzyme"/>
    <property type="match status" value="1"/>
</dbReference>
<dbReference type="InterPro" id="IPR023582">
    <property type="entry name" value="Impact"/>
</dbReference>
<dbReference type="InterPro" id="IPR001498">
    <property type="entry name" value="Impact_N"/>
</dbReference>
<dbReference type="InterPro" id="IPR036956">
    <property type="entry name" value="Impact_N_sf"/>
</dbReference>
<dbReference type="InterPro" id="IPR020568">
    <property type="entry name" value="Ribosomal_Su5_D2-typ_SF"/>
</dbReference>
<dbReference type="InterPro" id="IPR006575">
    <property type="entry name" value="RWD_dom"/>
</dbReference>
<dbReference type="InterPro" id="IPR016135">
    <property type="entry name" value="UBQ-conjugating_enzyme/RWD"/>
</dbReference>
<dbReference type="InterPro" id="IPR020569">
    <property type="entry name" value="UPF0029_Impact_CS"/>
</dbReference>
<dbReference type="PANTHER" id="PTHR16301">
    <property type="entry name" value="IMPACT-RELATED"/>
    <property type="match status" value="1"/>
</dbReference>
<dbReference type="PANTHER" id="PTHR16301:SF25">
    <property type="entry name" value="PROTEIN IMPACT"/>
    <property type="match status" value="1"/>
</dbReference>
<dbReference type="Pfam" id="PF05773">
    <property type="entry name" value="RWD"/>
    <property type="match status" value="1"/>
</dbReference>
<dbReference type="Pfam" id="PF01205">
    <property type="entry name" value="UPF0029"/>
    <property type="match status" value="1"/>
</dbReference>
<dbReference type="SMART" id="SM00591">
    <property type="entry name" value="RWD"/>
    <property type="match status" value="1"/>
</dbReference>
<dbReference type="SUPFAM" id="SSF54211">
    <property type="entry name" value="Ribosomal protein S5 domain 2-like"/>
    <property type="match status" value="1"/>
</dbReference>
<dbReference type="SUPFAM" id="SSF54495">
    <property type="entry name" value="UBC-like"/>
    <property type="match status" value="1"/>
</dbReference>
<dbReference type="PROSITE" id="PS50908">
    <property type="entry name" value="RWD"/>
    <property type="match status" value="1"/>
</dbReference>
<dbReference type="PROSITE" id="PS00910">
    <property type="entry name" value="UPF0029"/>
    <property type="match status" value="1"/>
</dbReference>
<organism>
    <name type="scientific">Saccharomyces cerevisiae (strain ATCC 204508 / S288c)</name>
    <name type="common">Baker's yeast</name>
    <dbReference type="NCBI Taxonomy" id="559292"/>
    <lineage>
        <taxon>Eukaryota</taxon>
        <taxon>Fungi</taxon>
        <taxon>Dikarya</taxon>
        <taxon>Ascomycota</taxon>
        <taxon>Saccharomycotina</taxon>
        <taxon>Saccharomycetes</taxon>
        <taxon>Saccharomycetales</taxon>
        <taxon>Saccharomycetaceae</taxon>
        <taxon>Saccharomyces</taxon>
    </lineage>
</organism>
<keyword id="KW-0002">3D-structure</keyword>
<keyword id="KW-0009">Actin-binding</keyword>
<keyword id="KW-0963">Cytoplasm</keyword>
<keyword id="KW-1017">Isopeptide bond</keyword>
<keyword id="KW-0539">Nucleus</keyword>
<keyword id="KW-1185">Reference proteome</keyword>
<keyword id="KW-0678">Repressor</keyword>
<keyword id="KW-0346">Stress response</keyword>
<keyword id="KW-0810">Translation regulation</keyword>
<keyword id="KW-0832">Ubl conjugation</keyword>
<reference key="1">
    <citation type="journal article" date="1992" name="Nature">
        <title>The complete DNA sequence of yeast chromosome III.</title>
        <authorList>
            <person name="Oliver S.G."/>
            <person name="van der Aart Q.J.M."/>
            <person name="Agostoni-Carbone M.L."/>
            <person name="Aigle M."/>
            <person name="Alberghina L."/>
            <person name="Alexandraki D."/>
            <person name="Antoine G."/>
            <person name="Anwar R."/>
            <person name="Ballesta J.P.G."/>
            <person name="Benit P."/>
            <person name="Berben G."/>
            <person name="Bergantino E."/>
            <person name="Biteau N."/>
            <person name="Bolle P.-A."/>
            <person name="Bolotin-Fukuhara M."/>
            <person name="Brown A."/>
            <person name="Brown A.J.P."/>
            <person name="Buhler J.-M."/>
            <person name="Carcano C."/>
            <person name="Carignani G."/>
            <person name="Cederberg H."/>
            <person name="Chanet R."/>
            <person name="Contreras R."/>
            <person name="Crouzet M."/>
            <person name="Daignan-Fornier B."/>
            <person name="Defoor E."/>
            <person name="Delgado M.D."/>
            <person name="Demolder J."/>
            <person name="Doira C."/>
            <person name="Dubois E."/>
            <person name="Dujon B."/>
            <person name="Duesterhoeft A."/>
            <person name="Erdmann D."/>
            <person name="Esteban M."/>
            <person name="Fabre F."/>
            <person name="Fairhead C."/>
            <person name="Faye G."/>
            <person name="Feldmann H."/>
            <person name="Fiers W."/>
            <person name="Francingues-Gaillard M.-C."/>
            <person name="Franco L."/>
            <person name="Frontali L."/>
            <person name="Fukuhara H."/>
            <person name="Fuller L.J."/>
            <person name="Galland P."/>
            <person name="Gent M.E."/>
            <person name="Gigot D."/>
            <person name="Gilliquet V."/>
            <person name="Glansdorff N."/>
            <person name="Goffeau A."/>
            <person name="Grenson M."/>
            <person name="Grisanti P."/>
            <person name="Grivell L.A."/>
            <person name="de Haan M."/>
            <person name="Haasemann M."/>
            <person name="Hatat D."/>
            <person name="Hoenicka J."/>
            <person name="Hegemann J.H."/>
            <person name="Herbert C.J."/>
            <person name="Hilger F."/>
            <person name="Hohmann S."/>
            <person name="Hollenberg C.P."/>
            <person name="Huse K."/>
            <person name="Iborra F."/>
            <person name="Indge K.J."/>
            <person name="Isono K."/>
            <person name="Jacq C."/>
            <person name="Jacquet M."/>
            <person name="James C.M."/>
            <person name="Jauniaux J.-C."/>
            <person name="Jia Y."/>
            <person name="Jimenez A."/>
            <person name="Kelly A."/>
            <person name="Kleinhans U."/>
            <person name="Kreisl P."/>
            <person name="Lanfranchi G."/>
            <person name="Lewis C."/>
            <person name="van der Linden C.G."/>
            <person name="Lucchini G."/>
            <person name="Lutzenkirchen K."/>
            <person name="Maat M.J."/>
            <person name="Mallet L."/>
            <person name="Mannhaupt G."/>
            <person name="Martegani E."/>
            <person name="Mathieu A."/>
            <person name="Maurer C.T.C."/>
            <person name="McConnell D."/>
            <person name="McKee R.A."/>
            <person name="Messenguy F."/>
            <person name="Mewes H.-W."/>
            <person name="Molemans F."/>
            <person name="Montague M.A."/>
            <person name="Muzi Falconi M."/>
            <person name="Navas L."/>
            <person name="Newlon C.S."/>
            <person name="Noone D."/>
            <person name="Pallier C."/>
            <person name="Panzeri L."/>
            <person name="Pearson B.M."/>
            <person name="Perea J."/>
            <person name="Philippsen P."/>
            <person name="Pierard A."/>
            <person name="Planta R.J."/>
            <person name="Plevani P."/>
            <person name="Poetsch B."/>
            <person name="Pohl F.M."/>
            <person name="Purnelle B."/>
            <person name="Ramezani Rad M."/>
            <person name="Rasmussen S.W."/>
            <person name="Raynal A."/>
            <person name="Remacha M.A."/>
            <person name="Richterich P."/>
            <person name="Roberts A.B."/>
            <person name="Rodriguez F."/>
            <person name="Sanz E."/>
            <person name="Schaaff-Gerstenschlaeger I."/>
            <person name="Scherens B."/>
            <person name="Schweitzer B."/>
            <person name="Shu Y."/>
            <person name="Skala J."/>
            <person name="Slonimski P.P."/>
            <person name="Sor F."/>
            <person name="Soustelle C."/>
            <person name="Spiegelberg R."/>
            <person name="Stateva L.I."/>
            <person name="Steensma H.Y."/>
            <person name="Steiner S."/>
            <person name="Thierry A."/>
            <person name="Thireos G."/>
            <person name="Tzermia M."/>
            <person name="Urrestarazu L.A."/>
            <person name="Valle G."/>
            <person name="Vetter I."/>
            <person name="van Vliet-Reedijk J.C."/>
            <person name="Voet M."/>
            <person name="Volckaert G."/>
            <person name="Vreken P."/>
            <person name="Wang H."/>
            <person name="Warmington J.R."/>
            <person name="von Wettstein D."/>
            <person name="Wicksteed B.L."/>
            <person name="Wilson C."/>
            <person name="Wurst H."/>
            <person name="Xu G."/>
            <person name="Yoshikawa A."/>
            <person name="Zimmermann F.K."/>
            <person name="Sgouros J.G."/>
        </authorList>
    </citation>
    <scope>NUCLEOTIDE SEQUENCE [LARGE SCALE GENOMIC DNA]</scope>
    <source>
        <strain>ATCC 204508 / S288c</strain>
    </source>
</reference>
<reference key="2">
    <citation type="journal article" date="2014" name="G3 (Bethesda)">
        <title>The reference genome sequence of Saccharomyces cerevisiae: Then and now.</title>
        <authorList>
            <person name="Engel S.R."/>
            <person name="Dietrich F.S."/>
            <person name="Fisk D.G."/>
            <person name="Binkley G."/>
            <person name="Balakrishnan R."/>
            <person name="Costanzo M.C."/>
            <person name="Dwight S.S."/>
            <person name="Hitz B.C."/>
            <person name="Karra K."/>
            <person name="Nash R.S."/>
            <person name="Weng S."/>
            <person name="Wong E.D."/>
            <person name="Lloyd P."/>
            <person name="Skrzypek M.S."/>
            <person name="Miyasato S.R."/>
            <person name="Simison M."/>
            <person name="Cherry J.M."/>
        </authorList>
    </citation>
    <scope>GENOME REANNOTATION</scope>
    <source>
        <strain>ATCC 204508 / S288c</strain>
    </source>
</reference>
<reference key="3">
    <citation type="journal article" date="2007" name="Genome Res.">
        <title>Approaching a complete repository of sequence-verified protein-encoding clones for Saccharomyces cerevisiae.</title>
        <authorList>
            <person name="Hu Y."/>
            <person name="Rolfs A."/>
            <person name="Bhullar B."/>
            <person name="Murthy T.V.S."/>
            <person name="Zhu C."/>
            <person name="Berger M.F."/>
            <person name="Camargo A.A."/>
            <person name="Kelley F."/>
            <person name="McCarron S."/>
            <person name="Jepson D."/>
            <person name="Richardson A."/>
            <person name="Raphael J."/>
            <person name="Moreira D."/>
            <person name="Taycher E."/>
            <person name="Zuo D."/>
            <person name="Mohr S."/>
            <person name="Kane M.F."/>
            <person name="Williamson J."/>
            <person name="Simpson A.J.G."/>
            <person name="Bulyk M.L."/>
            <person name="Harlow E."/>
            <person name="Marsischky G."/>
            <person name="Kolodner R.D."/>
            <person name="LaBaer J."/>
        </authorList>
    </citation>
    <scope>NUCLEOTIDE SEQUENCE [GENOMIC DNA]</scope>
    <source>
        <strain>ATCC 204508 / S288c</strain>
    </source>
</reference>
<reference key="4">
    <citation type="journal article" date="1994" name="EMBO J.">
        <title>Yeast chromosome III: new gene functions.</title>
        <authorList>
            <person name="Koonin E.V."/>
            <person name="Bork P."/>
            <person name="Sander C."/>
        </authorList>
    </citation>
    <scope>SIMILARITY</scope>
</reference>
<reference key="5">
    <citation type="journal article" date="2003" name="Nature">
        <title>Global analysis of protein localization in budding yeast.</title>
        <authorList>
            <person name="Huh W.-K."/>
            <person name="Falvo J.V."/>
            <person name="Gerke L.C."/>
            <person name="Carroll A.S."/>
            <person name="Howson R.W."/>
            <person name="Weissman J.S."/>
            <person name="O'Shea E.K."/>
        </authorList>
    </citation>
    <scope>SUBCELLULAR LOCATION [LARGE SCALE ANALYSIS]</scope>
</reference>
<reference key="6">
    <citation type="journal article" date="2003" name="Nature">
        <title>Global analysis of protein expression in yeast.</title>
        <authorList>
            <person name="Ghaemmaghami S."/>
            <person name="Huh W.-K."/>
            <person name="Bower K."/>
            <person name="Howson R.W."/>
            <person name="Belle A."/>
            <person name="Dephoure N."/>
            <person name="O'Shea E.K."/>
            <person name="Weissman J.S."/>
        </authorList>
    </citation>
    <scope>LEVEL OF PROTEIN EXPRESSION [LARGE SCALE ANALYSIS]</scope>
</reference>
<reference key="7">
    <citation type="journal article" date="2004" name="J. Biol. Chem.">
        <title>YIH1 is an actin-binding protein that inhibits protein kinase GCN2 and impairs general amino acid control when overexpressed.</title>
        <authorList>
            <person name="Sattlegger E."/>
            <person name="Swanson M.J."/>
            <person name="Ashcraft E.A."/>
            <person name="Jennings J.L."/>
            <person name="Fekete R.A."/>
            <person name="Link A.J."/>
            <person name="Hinnebusch A.G."/>
        </authorList>
    </citation>
    <scope>FUNCTION</scope>
    <scope>INTERACTION WITH GCN1 AND ACT1</scope>
</reference>
<reference key="8">
    <citation type="journal article" date="2005" name="J. Biol. Chem.">
        <title>IMPACT, a protein preferentially expressed in the mouse brain, binds GCN1 and inhibits GCN2 activation.</title>
        <authorList>
            <person name="Pereira C.M."/>
            <person name="Sattlegger E."/>
            <person name="Jiang H.-Y."/>
            <person name="Longo B.M."/>
            <person name="Jaqueta C.B."/>
            <person name="Hinnebusch A.G."/>
            <person name="Wek R.C."/>
            <person name="Mello L.E.A.M."/>
            <person name="Castilho B.A."/>
        </authorList>
    </citation>
    <scope>FUNCTION</scope>
</reference>
<reference key="9">
    <citation type="journal article" date="2011" name="J. Biol. Chem.">
        <title>Gcn1 and actin binding to Yih1: implications for activation of the eIF2 kinase GCN2.</title>
        <authorList>
            <person name="Sattlegger E."/>
            <person name="Barbosa J.A."/>
            <person name="Moraes M.C."/>
            <person name="Martins R.M."/>
            <person name="Hinnebusch A.G."/>
            <person name="Castilho B.A."/>
        </authorList>
    </citation>
    <scope>INTERACTION WITH ACT1 AND GCN1</scope>
    <scope>MUTAGENESIS OF GLU-87; ASP-90; ASP-102 AND GLU-106</scope>
</reference>
<reference key="10">
    <citation type="journal article" date="2012" name="FEBS J.">
        <title>Evidence that Yih1 resides in a complex with ribosomes.</title>
        <authorList>
            <person name="Waller T."/>
            <person name="Lee S.J."/>
            <person name="Sattlegger E."/>
        </authorList>
    </citation>
    <scope>INTERACTION WITH RPL39</scope>
    <scope>ASSOCIATION WITH RIBOSOMES</scope>
</reference>
<reference key="11">
    <citation type="journal article" date="2012" name="Proteomics">
        <title>Sites of ubiquitin attachment in Saccharomyces cerevisiae.</title>
        <authorList>
            <person name="Starita L.M."/>
            <person name="Lo R.S."/>
            <person name="Eng J.K."/>
            <person name="von Haller P.D."/>
            <person name="Fields S."/>
        </authorList>
    </citation>
    <scope>UBIQUITINATION [LARGE SCALE ANALYSIS] AT LYS-187</scope>
    <scope>IDENTIFICATION BY MASS SPECTROMETRY [LARGE SCALE ANALYSIS]</scope>
</reference>
<reference key="12">
    <citation type="journal article" date="2014" name="Biochem. Biophys. Res. Commun.">
        <title>Evolutionarily conserved IMPACT impairs various stress responses that require GCN1 for activating the eIF2 kinase GCN2.</title>
        <authorList>
            <person name="Cambiaghi T.D."/>
            <person name="Pereira C.M."/>
            <person name="Shanmugam R."/>
            <person name="Bolech M."/>
            <person name="Wek R.C."/>
            <person name="Sattlegger E."/>
            <person name="Castilho B.A."/>
        </authorList>
    </citation>
    <scope>FUNCTION</scope>
</reference>
<name>YIH1_YEAST</name>
<feature type="chain" id="PRO_0000207657" description="Protein IMPACT homolog">
    <location>
        <begin position="1"/>
        <end position="258"/>
    </location>
</feature>
<feature type="domain" description="RWD" evidence="1">
    <location>
        <begin position="10"/>
        <end position="114"/>
    </location>
</feature>
<feature type="cross-link" description="Glycyl lysine isopeptide (Lys-Gly) (interchain with G-Cter in ubiquitin)" evidence="10">
    <location>
        <position position="187"/>
    </location>
</feature>
<feature type="mutagenesis site" description="Slightly increases interaction with GCN1 and ACT1 and does not prevent inhibition of GCN2 activity in amino acid-starved cells; when associated with A-90.">
    <original>E</original>
    <variation>A</variation>
    <location>
        <position position="87"/>
    </location>
</feature>
<feature type="mutagenesis site" description="Slightly increases interaction with GCN1 and ACT1 and does not prevent inhibition of GCN2 activity in amino acid-starved cells; when associated with A-87.">
    <original>D</original>
    <variation>A</variation>
    <location>
        <position position="90"/>
    </location>
</feature>
<feature type="mutagenesis site" description="Decreases interaction with GCN1, but not with ACT1, and prevents inhibition of GCN2 activity in amino acid-starved cells; when associated with A-106.">
    <original>D</original>
    <variation>A</variation>
    <location>
        <position position="102"/>
    </location>
</feature>
<feature type="mutagenesis site" description="Decreases interaction with GCN1, but not with ACT1, and prevents inhibition of GCN2 activity in amino acid-starved cells; when associated with A-102.">
    <original>E</original>
    <variation>A</variation>
    <location>
        <position position="106"/>
    </location>
</feature>
<feature type="helix" evidence="11">
    <location>
        <begin position="4"/>
        <end position="18"/>
    </location>
</feature>
<feature type="turn" evidence="11">
    <location>
        <begin position="20"/>
        <end position="22"/>
    </location>
</feature>
<feature type="strand" evidence="11">
    <location>
        <begin position="23"/>
        <end position="36"/>
    </location>
</feature>
<feature type="turn" evidence="11">
    <location>
        <begin position="38"/>
        <end position="40"/>
    </location>
</feature>
<feature type="strand" evidence="11">
    <location>
        <begin position="44"/>
        <end position="48"/>
    </location>
</feature>
<feature type="turn" evidence="11">
    <location>
        <begin position="51"/>
        <end position="56"/>
    </location>
</feature>
<feature type="strand" evidence="11">
    <location>
        <begin position="60"/>
        <end position="65"/>
    </location>
</feature>
<feature type="turn" evidence="11">
    <location>
        <begin position="73"/>
        <end position="75"/>
    </location>
</feature>
<feature type="helix" evidence="11">
    <location>
        <begin position="78"/>
        <end position="89"/>
    </location>
</feature>
<feature type="helix" evidence="11">
    <location>
        <begin position="91"/>
        <end position="93"/>
    </location>
</feature>
<feature type="strand" evidence="11">
    <location>
        <begin position="94"/>
        <end position="97"/>
    </location>
</feature>
<feature type="helix" evidence="11">
    <location>
        <begin position="100"/>
        <end position="110"/>
    </location>
</feature>
<feature type="strand" evidence="11">
    <location>
        <begin position="136"/>
        <end position="142"/>
    </location>
</feature>
<feature type="strand" evidence="11">
    <location>
        <begin position="144"/>
        <end position="154"/>
    </location>
</feature>
<feature type="helix" evidence="11">
    <location>
        <begin position="158"/>
        <end position="169"/>
    </location>
</feature>
<feature type="turn" evidence="11">
    <location>
        <begin position="172"/>
        <end position="176"/>
    </location>
</feature>
<feature type="strand" evidence="11">
    <location>
        <begin position="177"/>
        <end position="183"/>
    </location>
</feature>
<feature type="strand" evidence="12">
    <location>
        <begin position="189"/>
        <end position="191"/>
    </location>
</feature>
<feature type="helix" evidence="11">
    <location>
        <begin position="204"/>
        <end position="216"/>
    </location>
</feature>
<feature type="strand" evidence="11">
    <location>
        <begin position="221"/>
        <end position="230"/>
    </location>
</feature>
<feature type="strand" evidence="11">
    <location>
        <begin position="232"/>
        <end position="235"/>
    </location>
</feature>
<feature type="helix" evidence="11">
    <location>
        <begin position="237"/>
        <end position="253"/>
    </location>
</feature>
<comment type="function">
    <text evidence="4 5 8">Translational regulator that ensures constant high levels of translation under amino acid starvation. Plays a role as a negative regulator of the GCN2 kinase activity; impairs GCN1-mediated GCN2 activation, and hence GCN2-mediated eIF-2-alpha phosphorylation in amino acid-starved cells and subsequent down-regulation of protein synthesis (PubMed:15126500, PubMed:15937339, PubMed:24333428). In normal conditions, it resides in a actin complex and has no activity (PubMed:15126500).</text>
</comment>
<comment type="subunit">
    <text evidence="4 6 7">Interacts (via N-terminus) with GCN1 (via C-terminus); this interaction reduces the GCN1-GCN20 complex formation and prevents the interaction of GCN1 with GCN2 protein kinase and GCN2 activation in amino acid-starved cells (PubMed:15126500, PubMed:21239490). Interacts (via C-terminus) with ACT1; this interaction occurs in a GCN1-independent manner (PubMed:15126500, PubMed:21239490). Interacts with RPL39; this interaction occurs in a GCN1-independent manner (PubMed:22404850). Associates (via middle region) with ribosomes; this association occurs in a GCN1-independent manner and persists under amino acid starvation conditions (PubMed:22404850).</text>
</comment>
<comment type="subcellular location">
    <subcellularLocation>
        <location evidence="2">Cytoplasm</location>
    </subcellularLocation>
    <subcellularLocation>
        <location evidence="2">Nucleus</location>
    </subcellularLocation>
</comment>
<comment type="miscellaneous">
    <text evidence="3">Present with 3030 molecules/cell in log phase SD medium.</text>
</comment>
<comment type="similarity">
    <text evidence="9">Belongs to the IMPACT family.</text>
</comment>
<sequence>MDDDHEQLVEELEAVEAIYPDLLSKKQEDGSIIVVKVPQHEYMTLQISFPTHYPSEEAPNVIEVGVCTSLAKRDLYDTKYLQHLFQEVMDSVFHRGSVCLFDFLTELDGVLYVEPEEETEPVQQSDIPTDPFEGWTASDPITDRGSTFMAFAAHVTSEEQAFAMLDLLKTDSKMRKANHVMSAWRIKQDGSAATYQDSDDDGETAAGSRMLHLITIMDVWNVIVVVARWFGGAHIGPDRFKHINSTAREAVVRAGFDS</sequence>